<name>ZN428_HUMAN</name>
<accession>Q96B54</accession>
<accession>O95054</accession>
<accession>Q6X3Y3</accession>
<sequence length="188" mass="20481">MTETREPAETGGYASLEEDDEDLSPGPEHSSDSEYTLSEPDSEEEEDEEEEEEETTDDPEYDPGYKVKQRLGGGRGGPSRRAPRAAQPPAQPCQLCGRSPLGEAPPGTPPCRLCCPATAPQEAPAPEGRALGEEEEEPPRAGEGRPAGREEEEEEEEEGTYHCTECEDSFDNLGELHGHFMLHARGEV</sequence>
<feature type="chain" id="PRO_0000312346" description="Zinc finger protein 428">
    <location>
        <begin position="1"/>
        <end position="188"/>
    </location>
</feature>
<feature type="zinc finger region" description="C2H2-type" evidence="1">
    <location>
        <begin position="161"/>
        <end position="183"/>
    </location>
</feature>
<feature type="region of interest" description="Disordered" evidence="2">
    <location>
        <begin position="1"/>
        <end position="162"/>
    </location>
</feature>
<feature type="compositionally biased region" description="Acidic residues" evidence="2">
    <location>
        <begin position="40"/>
        <end position="61"/>
    </location>
</feature>
<feature type="compositionally biased region" description="Low complexity" evidence="2">
    <location>
        <begin position="84"/>
        <end position="94"/>
    </location>
</feature>
<feature type="compositionally biased region" description="Low complexity" evidence="2">
    <location>
        <begin position="116"/>
        <end position="129"/>
    </location>
</feature>
<feature type="compositionally biased region" description="Basic and acidic residues" evidence="2">
    <location>
        <begin position="138"/>
        <end position="149"/>
    </location>
</feature>
<feature type="modified residue" description="Phosphothreonine" evidence="4">
    <location>
        <position position="108"/>
    </location>
</feature>
<evidence type="ECO:0000255" key="1">
    <source>
        <dbReference type="PROSITE-ProRule" id="PRU00042"/>
    </source>
</evidence>
<evidence type="ECO:0000256" key="2">
    <source>
        <dbReference type="SAM" id="MobiDB-lite"/>
    </source>
</evidence>
<evidence type="ECO:0000305" key="3"/>
<evidence type="ECO:0007744" key="4">
    <source>
    </source>
</evidence>
<reference key="1">
    <citation type="journal article" date="2004" name="Nature">
        <title>The DNA sequence and biology of human chromosome 19.</title>
        <authorList>
            <person name="Grimwood J."/>
            <person name="Gordon L.A."/>
            <person name="Olsen A.S."/>
            <person name="Terry A."/>
            <person name="Schmutz J."/>
            <person name="Lamerdin J.E."/>
            <person name="Hellsten U."/>
            <person name="Goodstein D."/>
            <person name="Couronne O."/>
            <person name="Tran-Gyamfi M."/>
            <person name="Aerts A."/>
            <person name="Altherr M."/>
            <person name="Ashworth L."/>
            <person name="Bajorek E."/>
            <person name="Black S."/>
            <person name="Branscomb E."/>
            <person name="Caenepeel S."/>
            <person name="Carrano A.V."/>
            <person name="Caoile C."/>
            <person name="Chan Y.M."/>
            <person name="Christensen M."/>
            <person name="Cleland C.A."/>
            <person name="Copeland A."/>
            <person name="Dalin E."/>
            <person name="Dehal P."/>
            <person name="Denys M."/>
            <person name="Detter J.C."/>
            <person name="Escobar J."/>
            <person name="Flowers D."/>
            <person name="Fotopulos D."/>
            <person name="Garcia C."/>
            <person name="Georgescu A.M."/>
            <person name="Glavina T."/>
            <person name="Gomez M."/>
            <person name="Gonzales E."/>
            <person name="Groza M."/>
            <person name="Hammon N."/>
            <person name="Hawkins T."/>
            <person name="Haydu L."/>
            <person name="Ho I."/>
            <person name="Huang W."/>
            <person name="Israni S."/>
            <person name="Jett J."/>
            <person name="Kadner K."/>
            <person name="Kimball H."/>
            <person name="Kobayashi A."/>
            <person name="Larionov V."/>
            <person name="Leem S.-H."/>
            <person name="Lopez F."/>
            <person name="Lou Y."/>
            <person name="Lowry S."/>
            <person name="Malfatti S."/>
            <person name="Martinez D."/>
            <person name="McCready P.M."/>
            <person name="Medina C."/>
            <person name="Morgan J."/>
            <person name="Nelson K."/>
            <person name="Nolan M."/>
            <person name="Ovcharenko I."/>
            <person name="Pitluck S."/>
            <person name="Pollard M."/>
            <person name="Popkie A.P."/>
            <person name="Predki P."/>
            <person name="Quan G."/>
            <person name="Ramirez L."/>
            <person name="Rash S."/>
            <person name="Retterer J."/>
            <person name="Rodriguez A."/>
            <person name="Rogers S."/>
            <person name="Salamov A."/>
            <person name="Salazar A."/>
            <person name="She X."/>
            <person name="Smith D."/>
            <person name="Slezak T."/>
            <person name="Solovyev V."/>
            <person name="Thayer N."/>
            <person name="Tice H."/>
            <person name="Tsai M."/>
            <person name="Ustaszewska A."/>
            <person name="Vo N."/>
            <person name="Wagner M."/>
            <person name="Wheeler J."/>
            <person name="Wu K."/>
            <person name="Xie G."/>
            <person name="Yang J."/>
            <person name="Dubchak I."/>
            <person name="Furey T.S."/>
            <person name="DeJong P."/>
            <person name="Dickson M."/>
            <person name="Gordon D."/>
            <person name="Eichler E.E."/>
            <person name="Pennacchio L.A."/>
            <person name="Richardson P."/>
            <person name="Stubbs L."/>
            <person name="Rokhsar D.S."/>
            <person name="Myers R.M."/>
            <person name="Rubin E.M."/>
            <person name="Lucas S.M."/>
        </authorList>
    </citation>
    <scope>NUCLEOTIDE SEQUENCE [LARGE SCALE GENOMIC DNA]</scope>
</reference>
<reference key="2">
    <citation type="submission" date="2005-07" db="EMBL/GenBank/DDBJ databases">
        <authorList>
            <person name="Mural R.J."/>
            <person name="Istrail S."/>
            <person name="Sutton G.G."/>
            <person name="Florea L."/>
            <person name="Halpern A.L."/>
            <person name="Mobarry C.M."/>
            <person name="Lippert R."/>
            <person name="Walenz B."/>
            <person name="Shatkay H."/>
            <person name="Dew I."/>
            <person name="Miller J.R."/>
            <person name="Flanigan M.J."/>
            <person name="Edwards N.J."/>
            <person name="Bolanos R."/>
            <person name="Fasulo D."/>
            <person name="Halldorsson B.V."/>
            <person name="Hannenhalli S."/>
            <person name="Turner R."/>
            <person name="Yooseph S."/>
            <person name="Lu F."/>
            <person name="Nusskern D.R."/>
            <person name="Shue B.C."/>
            <person name="Zheng X.H."/>
            <person name="Zhong F."/>
            <person name="Delcher A.L."/>
            <person name="Huson D.H."/>
            <person name="Kravitz S.A."/>
            <person name="Mouchard L."/>
            <person name="Reinert K."/>
            <person name="Remington K.A."/>
            <person name="Clark A.G."/>
            <person name="Waterman M.S."/>
            <person name="Eichler E.E."/>
            <person name="Adams M.D."/>
            <person name="Hunkapiller M.W."/>
            <person name="Myers E.W."/>
            <person name="Venter J.C."/>
        </authorList>
    </citation>
    <scope>NUCLEOTIDE SEQUENCE [LARGE SCALE GENOMIC DNA]</scope>
</reference>
<reference key="3">
    <citation type="journal article" date="2004" name="Genome Res.">
        <title>The status, quality, and expansion of the NIH full-length cDNA project: the Mammalian Gene Collection (MGC).</title>
        <authorList>
            <consortium name="The MGC Project Team"/>
        </authorList>
    </citation>
    <scope>NUCLEOTIDE SEQUENCE [LARGE SCALE MRNA]</scope>
    <source>
        <tissue>Uterus</tissue>
    </source>
</reference>
<reference key="4">
    <citation type="submission" date="2003-03" db="EMBL/GenBank/DDBJ databases">
        <title>Cloning and mapping of a novel human gene.</title>
        <authorList>
            <person name="Hu Q.-D."/>
            <person name="Huo K."/>
            <person name="Yuan H."/>
            <person name="Lu H."/>
            <person name="Li Y.-Y."/>
        </authorList>
    </citation>
    <scope>NUCLEOTIDE SEQUENCE [MRNA] OF 1-109</scope>
</reference>
<reference key="5">
    <citation type="journal article" date="2008" name="Proc. Natl. Acad. Sci. U.S.A.">
        <title>A quantitative atlas of mitotic phosphorylation.</title>
        <authorList>
            <person name="Dephoure N."/>
            <person name="Zhou C."/>
            <person name="Villen J."/>
            <person name="Beausoleil S.A."/>
            <person name="Bakalarski C.E."/>
            <person name="Elledge S.J."/>
            <person name="Gygi S.P."/>
        </authorList>
    </citation>
    <scope>IDENTIFICATION BY MASS SPECTROMETRY [LARGE SCALE ANALYSIS]</scope>
    <source>
        <tissue>Cervix carcinoma</tissue>
    </source>
</reference>
<reference key="6">
    <citation type="journal article" date="2013" name="J. Proteome Res.">
        <title>Toward a comprehensive characterization of a human cancer cell phosphoproteome.</title>
        <authorList>
            <person name="Zhou H."/>
            <person name="Di Palma S."/>
            <person name="Preisinger C."/>
            <person name="Peng M."/>
            <person name="Polat A.N."/>
            <person name="Heck A.J."/>
            <person name="Mohammed S."/>
        </authorList>
    </citation>
    <scope>PHOSPHORYLATION [LARGE SCALE ANALYSIS] AT THR-108</scope>
    <scope>IDENTIFICATION BY MASS SPECTROMETRY [LARGE SCALE ANALYSIS]</scope>
    <source>
        <tissue>Erythroleukemia</tissue>
    </source>
</reference>
<keyword id="KW-0479">Metal-binding</keyword>
<keyword id="KW-0597">Phosphoprotein</keyword>
<keyword id="KW-1267">Proteomics identification</keyword>
<keyword id="KW-1185">Reference proteome</keyword>
<keyword id="KW-0862">Zinc</keyword>
<keyword id="KW-0863">Zinc-finger</keyword>
<proteinExistence type="evidence at protein level"/>
<organism>
    <name type="scientific">Homo sapiens</name>
    <name type="common">Human</name>
    <dbReference type="NCBI Taxonomy" id="9606"/>
    <lineage>
        <taxon>Eukaryota</taxon>
        <taxon>Metazoa</taxon>
        <taxon>Chordata</taxon>
        <taxon>Craniata</taxon>
        <taxon>Vertebrata</taxon>
        <taxon>Euteleostomi</taxon>
        <taxon>Mammalia</taxon>
        <taxon>Eutheria</taxon>
        <taxon>Euarchontoglires</taxon>
        <taxon>Primates</taxon>
        <taxon>Haplorrhini</taxon>
        <taxon>Catarrhini</taxon>
        <taxon>Hominidae</taxon>
        <taxon>Homo</taxon>
    </lineage>
</organism>
<comment type="interaction">
    <interactant intactId="EBI-9995882">
        <id>Q96B54</id>
    </interactant>
    <interactant intactId="EBI-389432">
        <id>P09429</id>
        <label>HMGB1</label>
    </interactant>
    <organismsDiffer>false</organismsDiffer>
    <experiments>3</experiments>
</comment>
<comment type="interaction">
    <interactant intactId="EBI-9995882">
        <id>Q96B54</id>
    </interactant>
    <interactant intactId="EBI-1057009">
        <id>P26583</id>
        <label>HMGB2</label>
    </interactant>
    <organismsDiffer>false</organismsDiffer>
    <experiments>4</experiments>
</comment>
<comment type="sequence caution" evidence="3">
    <conflict type="erroneous gene model prediction">
        <sequence resource="EMBL-CDS" id="AAC99795"/>
    </conflict>
</comment>
<comment type="sequence caution" evidence="3">
    <conflict type="miscellaneous discrepancy">
        <sequence resource="EMBL-CDS" id="AAP87382"/>
    </conflict>
    <text>Intron retention at the C-terminus.</text>
</comment>
<gene>
    <name type="primary">ZNF428</name>
    <name type="synonym">C19orf37</name>
</gene>
<dbReference type="EMBL" id="AC006276">
    <property type="protein sequence ID" value="AAC99795.1"/>
    <property type="status" value="ALT_SEQ"/>
    <property type="molecule type" value="Genomic_DNA"/>
</dbReference>
<dbReference type="EMBL" id="CH471126">
    <property type="protein sequence ID" value="EAW57210.1"/>
    <property type="molecule type" value="Genomic_DNA"/>
</dbReference>
<dbReference type="EMBL" id="BC015950">
    <property type="protein sequence ID" value="AAH15950.2"/>
    <property type="molecule type" value="mRNA"/>
</dbReference>
<dbReference type="EMBL" id="AY257197">
    <property type="protein sequence ID" value="AAP87382.1"/>
    <property type="status" value="ALT_SEQ"/>
    <property type="molecule type" value="mRNA"/>
</dbReference>
<dbReference type="CCDS" id="CCDS12626.1"/>
<dbReference type="RefSeq" id="NP_872304.2">
    <property type="nucleotide sequence ID" value="NM_182498.3"/>
</dbReference>
<dbReference type="RefSeq" id="XP_047294124.1">
    <property type="nucleotide sequence ID" value="XM_047438168.1"/>
</dbReference>
<dbReference type="RefSeq" id="XP_054175771.1">
    <property type="nucleotide sequence ID" value="XM_054319796.1"/>
</dbReference>
<dbReference type="BioGRID" id="125976">
    <property type="interactions" value="30"/>
</dbReference>
<dbReference type="FunCoup" id="Q96B54">
    <property type="interactions" value="158"/>
</dbReference>
<dbReference type="IntAct" id="Q96B54">
    <property type="interactions" value="21"/>
</dbReference>
<dbReference type="STRING" id="9606.ENSP00000300811"/>
<dbReference type="GlyGen" id="Q96B54">
    <property type="glycosylation" value="1 site"/>
</dbReference>
<dbReference type="iPTMnet" id="Q96B54"/>
<dbReference type="PhosphoSitePlus" id="Q96B54"/>
<dbReference type="BioMuta" id="ZNF428"/>
<dbReference type="DMDM" id="74760720"/>
<dbReference type="jPOST" id="Q96B54"/>
<dbReference type="MassIVE" id="Q96B54"/>
<dbReference type="PaxDb" id="9606-ENSP00000300811"/>
<dbReference type="PeptideAtlas" id="Q96B54"/>
<dbReference type="ProteomicsDB" id="76046"/>
<dbReference type="Pumba" id="Q96B54"/>
<dbReference type="Antibodypedia" id="31091">
    <property type="antibodies" value="85 antibodies from 15 providers"/>
</dbReference>
<dbReference type="DNASU" id="126299"/>
<dbReference type="Ensembl" id="ENST00000300811.8">
    <property type="protein sequence ID" value="ENSP00000300811.2"/>
    <property type="gene ID" value="ENSG00000131116.12"/>
</dbReference>
<dbReference type="GeneID" id="126299"/>
<dbReference type="KEGG" id="hsa:126299"/>
<dbReference type="MANE-Select" id="ENST00000300811.8">
    <property type="protein sequence ID" value="ENSP00000300811.2"/>
    <property type="RefSeq nucleotide sequence ID" value="NM_182498.4"/>
    <property type="RefSeq protein sequence ID" value="NP_872304.2"/>
</dbReference>
<dbReference type="UCSC" id="uc002oxa.4">
    <property type="organism name" value="human"/>
</dbReference>
<dbReference type="AGR" id="HGNC:20804"/>
<dbReference type="CTD" id="126299"/>
<dbReference type="DisGeNET" id="126299"/>
<dbReference type="GeneCards" id="ZNF428"/>
<dbReference type="HGNC" id="HGNC:20804">
    <property type="gene designation" value="ZNF428"/>
</dbReference>
<dbReference type="HPA" id="ENSG00000131116">
    <property type="expression patterns" value="Low tissue specificity"/>
</dbReference>
<dbReference type="neXtProt" id="NX_Q96B54"/>
<dbReference type="OpenTargets" id="ENSG00000131116"/>
<dbReference type="PharmGKB" id="PA142672216"/>
<dbReference type="VEuPathDB" id="HostDB:ENSG00000131116"/>
<dbReference type="eggNOG" id="ENOG502T3CS">
    <property type="taxonomic scope" value="Eukaryota"/>
</dbReference>
<dbReference type="GeneTree" id="ENSGT00390000006595"/>
<dbReference type="HOGENOM" id="CLU_1421044_0_0_1"/>
<dbReference type="InParanoid" id="Q96B54"/>
<dbReference type="OMA" id="EGGAYHC"/>
<dbReference type="OrthoDB" id="9751516at2759"/>
<dbReference type="PAN-GO" id="Q96B54">
    <property type="GO annotations" value="0 GO annotations based on evolutionary models"/>
</dbReference>
<dbReference type="PhylomeDB" id="Q96B54"/>
<dbReference type="TreeFam" id="TF337528"/>
<dbReference type="PathwayCommons" id="Q96B54"/>
<dbReference type="SignaLink" id="Q96B54"/>
<dbReference type="BioGRID-ORCS" id="126299">
    <property type="hits" value="14 hits in 1153 CRISPR screens"/>
</dbReference>
<dbReference type="GenomeRNAi" id="126299"/>
<dbReference type="Pharos" id="Q96B54">
    <property type="development level" value="Tdark"/>
</dbReference>
<dbReference type="PRO" id="PR:Q96B54"/>
<dbReference type="Proteomes" id="UP000005640">
    <property type="component" value="Chromosome 19"/>
</dbReference>
<dbReference type="RNAct" id="Q96B54">
    <property type="molecule type" value="protein"/>
</dbReference>
<dbReference type="Bgee" id="ENSG00000131116">
    <property type="expression patterns" value="Expressed in cortical plate and 139 other cell types or tissues"/>
</dbReference>
<dbReference type="ExpressionAtlas" id="Q96B54">
    <property type="expression patterns" value="baseline and differential"/>
</dbReference>
<dbReference type="GO" id="GO:0008270">
    <property type="term" value="F:zinc ion binding"/>
    <property type="evidence" value="ECO:0007669"/>
    <property type="project" value="UniProtKB-KW"/>
</dbReference>
<dbReference type="InterPro" id="IPR038977">
    <property type="entry name" value="ZNF428"/>
</dbReference>
<dbReference type="InterPro" id="IPR013087">
    <property type="entry name" value="Znf_C2H2_type"/>
</dbReference>
<dbReference type="PANTHER" id="PTHR36862">
    <property type="entry name" value="ZINC FINGER PROTEIN 428"/>
    <property type="match status" value="1"/>
</dbReference>
<dbReference type="PANTHER" id="PTHR36862:SF1">
    <property type="entry name" value="ZINC FINGER PROTEIN 428"/>
    <property type="match status" value="1"/>
</dbReference>
<dbReference type="PROSITE" id="PS00028">
    <property type="entry name" value="ZINC_FINGER_C2H2_1"/>
    <property type="match status" value="1"/>
</dbReference>
<dbReference type="PROSITE" id="PS50157">
    <property type="entry name" value="ZINC_FINGER_C2H2_2"/>
    <property type="match status" value="1"/>
</dbReference>
<protein>
    <recommendedName>
        <fullName>Zinc finger protein 428</fullName>
    </recommendedName>
    <alternativeName>
        <fullName>Enzyme-like protein PIT13</fullName>
    </alternativeName>
</protein>